<proteinExistence type="inferred from homology"/>
<feature type="chain" id="PRO_1000026247" description="Nucleoside diphosphate kinase">
    <location>
        <begin position="1"/>
        <end position="147"/>
    </location>
</feature>
<feature type="active site" description="Pros-phosphohistidine intermediate" evidence="1">
    <location>
        <position position="115"/>
    </location>
</feature>
<feature type="binding site" evidence="1">
    <location>
        <position position="9"/>
    </location>
    <ligand>
        <name>ATP</name>
        <dbReference type="ChEBI" id="CHEBI:30616"/>
    </ligand>
</feature>
<feature type="binding site" evidence="1">
    <location>
        <position position="57"/>
    </location>
    <ligand>
        <name>ATP</name>
        <dbReference type="ChEBI" id="CHEBI:30616"/>
    </ligand>
</feature>
<feature type="binding site" evidence="1">
    <location>
        <position position="85"/>
    </location>
    <ligand>
        <name>ATP</name>
        <dbReference type="ChEBI" id="CHEBI:30616"/>
    </ligand>
</feature>
<feature type="binding site" evidence="1">
    <location>
        <position position="91"/>
    </location>
    <ligand>
        <name>ATP</name>
        <dbReference type="ChEBI" id="CHEBI:30616"/>
    </ligand>
</feature>
<feature type="binding site" evidence="1">
    <location>
        <position position="102"/>
    </location>
    <ligand>
        <name>ATP</name>
        <dbReference type="ChEBI" id="CHEBI:30616"/>
    </ligand>
</feature>
<feature type="binding site" evidence="1">
    <location>
        <position position="112"/>
    </location>
    <ligand>
        <name>ATP</name>
        <dbReference type="ChEBI" id="CHEBI:30616"/>
    </ligand>
</feature>
<gene>
    <name evidence="1" type="primary">ndk</name>
    <name type="ordered locus">lwe1955</name>
</gene>
<organism>
    <name type="scientific">Listeria welshimeri serovar 6b (strain ATCC 35897 / DSM 20650 / CCUG 15529 / CIP 8149 / NCTC 11857 / SLCC 5334 / V8)</name>
    <dbReference type="NCBI Taxonomy" id="386043"/>
    <lineage>
        <taxon>Bacteria</taxon>
        <taxon>Bacillati</taxon>
        <taxon>Bacillota</taxon>
        <taxon>Bacilli</taxon>
        <taxon>Bacillales</taxon>
        <taxon>Listeriaceae</taxon>
        <taxon>Listeria</taxon>
    </lineage>
</organism>
<keyword id="KW-0067">ATP-binding</keyword>
<keyword id="KW-0963">Cytoplasm</keyword>
<keyword id="KW-0418">Kinase</keyword>
<keyword id="KW-0460">Magnesium</keyword>
<keyword id="KW-0479">Metal-binding</keyword>
<keyword id="KW-0546">Nucleotide metabolism</keyword>
<keyword id="KW-0547">Nucleotide-binding</keyword>
<keyword id="KW-0597">Phosphoprotein</keyword>
<keyword id="KW-0808">Transferase</keyword>
<accession>A0AK41</accession>
<name>NDK_LISW6</name>
<evidence type="ECO:0000255" key="1">
    <source>
        <dbReference type="HAMAP-Rule" id="MF_00451"/>
    </source>
</evidence>
<reference key="1">
    <citation type="journal article" date="2006" name="J. Bacteriol.">
        <title>Whole-genome sequence of Listeria welshimeri reveals common steps in genome reduction with Listeria innocua as compared to Listeria monocytogenes.</title>
        <authorList>
            <person name="Hain T."/>
            <person name="Steinweg C."/>
            <person name="Kuenne C.T."/>
            <person name="Billion A."/>
            <person name="Ghai R."/>
            <person name="Chatterjee S.S."/>
            <person name="Domann E."/>
            <person name="Kaerst U."/>
            <person name="Goesmann A."/>
            <person name="Bekel T."/>
            <person name="Bartels D."/>
            <person name="Kaiser O."/>
            <person name="Meyer F."/>
            <person name="Puehler A."/>
            <person name="Weisshaar B."/>
            <person name="Wehland J."/>
            <person name="Liang C."/>
            <person name="Dandekar T."/>
            <person name="Lampidis R."/>
            <person name="Kreft J."/>
            <person name="Goebel W."/>
            <person name="Chakraborty T."/>
        </authorList>
    </citation>
    <scope>NUCLEOTIDE SEQUENCE [LARGE SCALE GENOMIC DNA]</scope>
    <source>
        <strain>ATCC 35897 / DSM 20650 / CCUG 15529 / CIP 8149 / NCTC 11857 / SLCC 5334 / V8</strain>
    </source>
</reference>
<comment type="function">
    <text evidence="1">Major role in the synthesis of nucleoside triphosphates other than ATP. The ATP gamma phosphate is transferred to the NDP beta phosphate via a ping-pong mechanism, using a phosphorylated active-site intermediate.</text>
</comment>
<comment type="catalytic activity">
    <reaction evidence="1">
        <text>a 2'-deoxyribonucleoside 5'-diphosphate + ATP = a 2'-deoxyribonucleoside 5'-triphosphate + ADP</text>
        <dbReference type="Rhea" id="RHEA:44640"/>
        <dbReference type="ChEBI" id="CHEBI:30616"/>
        <dbReference type="ChEBI" id="CHEBI:61560"/>
        <dbReference type="ChEBI" id="CHEBI:73316"/>
        <dbReference type="ChEBI" id="CHEBI:456216"/>
        <dbReference type="EC" id="2.7.4.6"/>
    </reaction>
</comment>
<comment type="catalytic activity">
    <reaction evidence="1">
        <text>a ribonucleoside 5'-diphosphate + ATP = a ribonucleoside 5'-triphosphate + ADP</text>
        <dbReference type="Rhea" id="RHEA:18113"/>
        <dbReference type="ChEBI" id="CHEBI:30616"/>
        <dbReference type="ChEBI" id="CHEBI:57930"/>
        <dbReference type="ChEBI" id="CHEBI:61557"/>
        <dbReference type="ChEBI" id="CHEBI:456216"/>
        <dbReference type="EC" id="2.7.4.6"/>
    </reaction>
</comment>
<comment type="cofactor">
    <cofactor evidence="1">
        <name>Mg(2+)</name>
        <dbReference type="ChEBI" id="CHEBI:18420"/>
    </cofactor>
</comment>
<comment type="subunit">
    <text evidence="1">Homotetramer.</text>
</comment>
<comment type="subcellular location">
    <subcellularLocation>
        <location evidence="1">Cytoplasm</location>
    </subcellularLocation>
</comment>
<comment type="similarity">
    <text evidence="1">Belongs to the NDK family.</text>
</comment>
<protein>
    <recommendedName>
        <fullName evidence="1">Nucleoside diphosphate kinase</fullName>
        <shortName evidence="1">NDK</shortName>
        <shortName evidence="1">NDP kinase</shortName>
        <ecNumber evidence="1">2.7.4.6</ecNumber>
    </recommendedName>
    <alternativeName>
        <fullName evidence="1">Nucleoside-2-P kinase</fullName>
    </alternativeName>
</protein>
<dbReference type="EC" id="2.7.4.6" evidence="1"/>
<dbReference type="EMBL" id="AM263198">
    <property type="protein sequence ID" value="CAK21373.1"/>
    <property type="molecule type" value="Genomic_DNA"/>
</dbReference>
<dbReference type="RefSeq" id="WP_011702721.1">
    <property type="nucleotide sequence ID" value="NC_008555.1"/>
</dbReference>
<dbReference type="SMR" id="A0AK41"/>
<dbReference type="STRING" id="386043.lwe1955"/>
<dbReference type="GeneID" id="61189855"/>
<dbReference type="KEGG" id="lwe:lwe1955"/>
<dbReference type="eggNOG" id="COG0105">
    <property type="taxonomic scope" value="Bacteria"/>
</dbReference>
<dbReference type="HOGENOM" id="CLU_060216_6_3_9"/>
<dbReference type="OrthoDB" id="9801161at2"/>
<dbReference type="Proteomes" id="UP000000779">
    <property type="component" value="Chromosome"/>
</dbReference>
<dbReference type="GO" id="GO:0005737">
    <property type="term" value="C:cytoplasm"/>
    <property type="evidence" value="ECO:0007669"/>
    <property type="project" value="UniProtKB-SubCell"/>
</dbReference>
<dbReference type="GO" id="GO:0005524">
    <property type="term" value="F:ATP binding"/>
    <property type="evidence" value="ECO:0007669"/>
    <property type="project" value="UniProtKB-UniRule"/>
</dbReference>
<dbReference type="GO" id="GO:0046872">
    <property type="term" value="F:metal ion binding"/>
    <property type="evidence" value="ECO:0007669"/>
    <property type="project" value="UniProtKB-KW"/>
</dbReference>
<dbReference type="GO" id="GO:0004550">
    <property type="term" value="F:nucleoside diphosphate kinase activity"/>
    <property type="evidence" value="ECO:0007669"/>
    <property type="project" value="UniProtKB-UniRule"/>
</dbReference>
<dbReference type="GO" id="GO:0006241">
    <property type="term" value="P:CTP biosynthetic process"/>
    <property type="evidence" value="ECO:0007669"/>
    <property type="project" value="UniProtKB-UniRule"/>
</dbReference>
<dbReference type="GO" id="GO:0006183">
    <property type="term" value="P:GTP biosynthetic process"/>
    <property type="evidence" value="ECO:0007669"/>
    <property type="project" value="UniProtKB-UniRule"/>
</dbReference>
<dbReference type="GO" id="GO:0006228">
    <property type="term" value="P:UTP biosynthetic process"/>
    <property type="evidence" value="ECO:0007669"/>
    <property type="project" value="UniProtKB-UniRule"/>
</dbReference>
<dbReference type="CDD" id="cd04413">
    <property type="entry name" value="NDPk_I"/>
    <property type="match status" value="1"/>
</dbReference>
<dbReference type="FunFam" id="3.30.70.141:FF:000003">
    <property type="entry name" value="Nucleoside diphosphate kinase"/>
    <property type="match status" value="1"/>
</dbReference>
<dbReference type="Gene3D" id="3.30.70.141">
    <property type="entry name" value="Nucleoside diphosphate kinase-like domain"/>
    <property type="match status" value="1"/>
</dbReference>
<dbReference type="HAMAP" id="MF_00451">
    <property type="entry name" value="NDP_kinase"/>
    <property type="match status" value="1"/>
</dbReference>
<dbReference type="InterPro" id="IPR034907">
    <property type="entry name" value="NDK-like_dom"/>
</dbReference>
<dbReference type="InterPro" id="IPR036850">
    <property type="entry name" value="NDK-like_dom_sf"/>
</dbReference>
<dbReference type="InterPro" id="IPR001564">
    <property type="entry name" value="Nucleoside_diP_kinase"/>
</dbReference>
<dbReference type="InterPro" id="IPR023005">
    <property type="entry name" value="Nucleoside_diP_kinase_AS"/>
</dbReference>
<dbReference type="NCBIfam" id="NF001908">
    <property type="entry name" value="PRK00668.1"/>
    <property type="match status" value="1"/>
</dbReference>
<dbReference type="PANTHER" id="PTHR11349">
    <property type="entry name" value="NUCLEOSIDE DIPHOSPHATE KINASE"/>
    <property type="match status" value="1"/>
</dbReference>
<dbReference type="Pfam" id="PF00334">
    <property type="entry name" value="NDK"/>
    <property type="match status" value="1"/>
</dbReference>
<dbReference type="PRINTS" id="PR01243">
    <property type="entry name" value="NUCDPKINASE"/>
</dbReference>
<dbReference type="SMART" id="SM00562">
    <property type="entry name" value="NDK"/>
    <property type="match status" value="1"/>
</dbReference>
<dbReference type="SUPFAM" id="SSF54919">
    <property type="entry name" value="Nucleoside diphosphate kinase, NDK"/>
    <property type="match status" value="1"/>
</dbReference>
<dbReference type="PROSITE" id="PS00469">
    <property type="entry name" value="NDPK"/>
    <property type="match status" value="1"/>
</dbReference>
<dbReference type="PROSITE" id="PS51374">
    <property type="entry name" value="NDPK_LIKE"/>
    <property type="match status" value="1"/>
</dbReference>
<sequence>MEQTYVMVKPDGVERGLIGEIVAKIEKKGIKLVAGKLIQIDRKLAEQHYAEHIGKPFFEDLIGFITSGPVFAMVLEGDDVIKIARRMMGKTNPLEADAGTIRAEYAVHTNRNVIHGSDSPESAKREIQLFFEPHEILSYEKAVDIWV</sequence>